<feature type="signal peptide" evidence="4 11">
    <location>
        <begin position="1"/>
        <end position="16"/>
    </location>
</feature>
<feature type="chain" id="PRO_0000022859" description="Phospholipase A2 crotoxin basic subunit CBc">
    <location>
        <begin position="17"/>
        <end position="138"/>
    </location>
</feature>
<feature type="active site" evidence="15">
    <location>
        <position position="63"/>
    </location>
</feature>
<feature type="active site" evidence="15">
    <location>
        <position position="105"/>
    </location>
</feature>
<feature type="binding site" evidence="6 17">
    <location>
        <position position="43"/>
    </location>
    <ligand>
        <name>Ca(2+)</name>
        <dbReference type="ChEBI" id="CHEBI:29108"/>
    </ligand>
</feature>
<feature type="binding site" evidence="6 17">
    <location>
        <position position="45"/>
    </location>
    <ligand>
        <name>Ca(2+)</name>
        <dbReference type="ChEBI" id="CHEBI:29108"/>
    </ligand>
</feature>
<feature type="binding site" evidence="6 17">
    <location>
        <position position="47"/>
    </location>
    <ligand>
        <name>Ca(2+)</name>
        <dbReference type="ChEBI" id="CHEBI:29108"/>
    </ligand>
</feature>
<feature type="binding site" evidence="6 17">
    <location>
        <position position="64"/>
    </location>
    <ligand>
        <name>Ca(2+)</name>
        <dbReference type="ChEBI" id="CHEBI:29108"/>
    </ligand>
</feature>
<feature type="site" description="Responsible for the weak stability and toxicity" evidence="8">
    <location>
        <position position="17"/>
    </location>
</feature>
<feature type="site" description="Putative interfacial binding surface (IBS)" evidence="8">
    <location>
        <position position="18"/>
    </location>
</feature>
<feature type="site" description="Putative interfacial binding surface (IBS)" evidence="8">
    <location>
        <position position="19"/>
    </location>
</feature>
<feature type="site" description="Putative interfacial binding surface (IBS)" evidence="8">
    <location>
        <position position="23"/>
    </location>
</feature>
<feature type="site" description="Putative interfacial binding surface (IBS)" evidence="8">
    <location>
        <position position="26"/>
    </location>
</feature>
<feature type="site" description="Putative interfacial binding surface (IBS)" evidence="8">
    <location>
        <position position="33"/>
    </location>
</feature>
<feature type="site" description="Putative interfacial binding surface (IBS)" evidence="8">
    <location>
        <position position="38"/>
    </location>
</feature>
<feature type="site" description="Putative interfacial binding surface (IBS)" evidence="8">
    <location>
        <position position="39"/>
    </location>
</feature>
<feature type="site" description="Putative interfacial binding surface (IBS)" evidence="8">
    <location>
        <position position="76"/>
    </location>
</feature>
<feature type="site" description="Putative interfacial binding surface (IBS)" evidence="8">
    <location>
        <position position="119"/>
    </location>
</feature>
<feature type="site" description="Responsible for the higher anticoagulant activity (compared with CBa2)" evidence="5">
    <location>
        <position position="133"/>
    </location>
</feature>
<feature type="disulfide bond" evidence="6 17">
    <location>
        <begin position="42"/>
        <end position="131"/>
    </location>
</feature>
<feature type="disulfide bond" evidence="6 17">
    <location>
        <begin position="44"/>
        <end position="60"/>
    </location>
</feature>
<feature type="disulfide bond" evidence="6 17">
    <location>
        <begin position="59"/>
        <end position="111"/>
    </location>
</feature>
<feature type="disulfide bond" evidence="6 17">
    <location>
        <begin position="65"/>
        <end position="138"/>
    </location>
</feature>
<feature type="disulfide bond" evidence="6 17">
    <location>
        <begin position="66"/>
        <end position="104"/>
    </location>
</feature>
<feature type="disulfide bond" evidence="6 17">
    <location>
        <begin position="73"/>
        <end position="97"/>
    </location>
</feature>
<feature type="disulfide bond" evidence="6 17">
    <location>
        <begin position="91"/>
        <end position="102"/>
    </location>
</feature>
<feature type="helix" evidence="18">
    <location>
        <begin position="18"/>
        <end position="29"/>
    </location>
</feature>
<feature type="helix" evidence="18">
    <location>
        <begin position="33"/>
        <end position="36"/>
    </location>
</feature>
<feature type="turn" evidence="18">
    <location>
        <begin position="37"/>
        <end position="39"/>
    </location>
</feature>
<feature type="turn" evidence="18">
    <location>
        <begin position="41"/>
        <end position="43"/>
    </location>
</feature>
<feature type="strand" evidence="18">
    <location>
        <begin position="44"/>
        <end position="47"/>
    </location>
</feature>
<feature type="helix" evidence="18">
    <location>
        <begin position="55"/>
        <end position="68"/>
    </location>
</feature>
<feature type="turn" evidence="18">
    <location>
        <begin position="69"/>
        <end position="72"/>
    </location>
</feature>
<feature type="turn" evidence="18">
    <location>
        <begin position="75"/>
        <end position="77"/>
    </location>
</feature>
<feature type="helix" evidence="18">
    <location>
        <begin position="96"/>
        <end position="114"/>
    </location>
</feature>
<feature type="helix" evidence="18">
    <location>
        <begin position="116"/>
        <end position="118"/>
    </location>
</feature>
<feature type="helix" evidence="18">
    <location>
        <begin position="121"/>
        <end position="123"/>
    </location>
</feature>
<feature type="turn" evidence="18">
    <location>
        <begin position="128"/>
        <end position="130"/>
    </location>
</feature>
<keyword id="KW-0002">3D-structure</keyword>
<keyword id="KW-1203">Blood coagulation cascade inhibiting toxin</keyword>
<keyword id="KW-0106">Calcium</keyword>
<keyword id="KW-0903">Direct protein sequencing</keyword>
<keyword id="KW-1015">Disulfide bond</keyword>
<keyword id="KW-1199">Hemostasis impairing toxin</keyword>
<keyword id="KW-0378">Hydrolase</keyword>
<keyword id="KW-0872">Ion channel impairing toxin</keyword>
<keyword id="KW-0442">Lipid degradation</keyword>
<keyword id="KW-0443">Lipid metabolism</keyword>
<keyword id="KW-0479">Metal-binding</keyword>
<keyword id="KW-0528">Neurotoxin</keyword>
<keyword id="KW-0582">Pharmaceutical</keyword>
<keyword id="KW-0638">Presynaptic neurotoxin</keyword>
<keyword id="KW-0964">Secreted</keyword>
<keyword id="KW-0732">Signal</keyword>
<keyword id="KW-0800">Toxin</keyword>
<dbReference type="EC" id="3.1.1.4" evidence="2 3"/>
<dbReference type="EMBL" id="X12603">
    <property type="protein sequence ID" value="CAA31123.1"/>
    <property type="molecule type" value="mRNA"/>
</dbReference>
<dbReference type="PIR" id="S02257">
    <property type="entry name" value="PSRSBT"/>
</dbReference>
<dbReference type="PDB" id="2QOG">
    <property type="method" value="X-ray"/>
    <property type="resolution" value="2.28 A"/>
    <property type="chains" value="B/C=17-138"/>
</dbReference>
<dbReference type="PDBsum" id="2QOG"/>
<dbReference type="SMR" id="P62022"/>
<dbReference type="ComplexPortal" id="CPX-7301">
    <property type="entry name" value="Crotoxin complex, aCA1/2/4-bCA2/3/4-CBc variant"/>
</dbReference>
<dbReference type="ComplexPortal" id="CPX-7302">
    <property type="entry name" value="Crotoxin complex, aCA1/2/4-bCA1-CBc variant"/>
</dbReference>
<dbReference type="ComplexPortal" id="CPX-7303">
    <property type="entry name" value="Crotoxin complex, aCA3-bCA1-CBc variant"/>
</dbReference>
<dbReference type="ComplexPortal" id="CPX-7304">
    <property type="entry name" value="Crotoxin complex, aCA3-bCA2/3/4-CBc variant"/>
</dbReference>
<dbReference type="ABCD" id="P62022">
    <property type="antibodies" value="7 sequenced antibodies"/>
</dbReference>
<dbReference type="SABIO-RK" id="P62022"/>
<dbReference type="EvolutionaryTrace" id="P62022"/>
<dbReference type="GO" id="GO:0005576">
    <property type="term" value="C:extracellular region"/>
    <property type="evidence" value="ECO:0000314"/>
    <property type="project" value="UniProtKB"/>
</dbReference>
<dbReference type="GO" id="GO:0005509">
    <property type="term" value="F:calcium ion binding"/>
    <property type="evidence" value="ECO:0007669"/>
    <property type="project" value="InterPro"/>
</dbReference>
<dbReference type="GO" id="GO:0047498">
    <property type="term" value="F:calcium-dependent phospholipase A2 activity"/>
    <property type="evidence" value="ECO:0007669"/>
    <property type="project" value="TreeGrafter"/>
</dbReference>
<dbReference type="GO" id="GO:0099106">
    <property type="term" value="F:ion channel regulator activity"/>
    <property type="evidence" value="ECO:0007669"/>
    <property type="project" value="UniProtKB-KW"/>
</dbReference>
<dbReference type="GO" id="GO:0005543">
    <property type="term" value="F:phospholipid binding"/>
    <property type="evidence" value="ECO:0007669"/>
    <property type="project" value="TreeGrafter"/>
</dbReference>
<dbReference type="GO" id="GO:0090729">
    <property type="term" value="F:toxin activity"/>
    <property type="evidence" value="ECO:0007669"/>
    <property type="project" value="UniProtKB-KW"/>
</dbReference>
<dbReference type="GO" id="GO:0050482">
    <property type="term" value="P:arachidonate secretion"/>
    <property type="evidence" value="ECO:0007669"/>
    <property type="project" value="InterPro"/>
</dbReference>
<dbReference type="GO" id="GO:0016042">
    <property type="term" value="P:lipid catabolic process"/>
    <property type="evidence" value="ECO:0007669"/>
    <property type="project" value="UniProtKB-KW"/>
</dbReference>
<dbReference type="GO" id="GO:0042130">
    <property type="term" value="P:negative regulation of T cell proliferation"/>
    <property type="evidence" value="ECO:0007669"/>
    <property type="project" value="TreeGrafter"/>
</dbReference>
<dbReference type="GO" id="GO:0006644">
    <property type="term" value="P:phospholipid metabolic process"/>
    <property type="evidence" value="ECO:0007669"/>
    <property type="project" value="InterPro"/>
</dbReference>
<dbReference type="GO" id="GO:0044398">
    <property type="term" value="P:venom-mediated edema in another organism"/>
    <property type="evidence" value="ECO:0000314"/>
    <property type="project" value="UniProtKB"/>
</dbReference>
<dbReference type="GO" id="GO:0044521">
    <property type="term" value="P:venom-mediated muscle damage in another organism"/>
    <property type="evidence" value="ECO:0000314"/>
    <property type="project" value="UniProtKB"/>
</dbReference>
<dbReference type="GO" id="GO:0044522">
    <property type="term" value="P:venom-mediated myocyte killing in another organism"/>
    <property type="evidence" value="ECO:0000314"/>
    <property type="project" value="UniProtKB"/>
</dbReference>
<dbReference type="GO" id="GO:0044478">
    <property type="term" value="P:venom-mediated platelet aggregation"/>
    <property type="evidence" value="ECO:0000314"/>
    <property type="project" value="UniProtKB"/>
</dbReference>
<dbReference type="CDD" id="cd00125">
    <property type="entry name" value="PLA2c"/>
    <property type="match status" value="1"/>
</dbReference>
<dbReference type="FunFam" id="1.20.90.10:FF:000001">
    <property type="entry name" value="Basic phospholipase A2 homolog"/>
    <property type="match status" value="1"/>
</dbReference>
<dbReference type="Gene3D" id="1.20.90.10">
    <property type="entry name" value="Phospholipase A2 domain"/>
    <property type="match status" value="1"/>
</dbReference>
<dbReference type="InterPro" id="IPR001211">
    <property type="entry name" value="PLipase_A2"/>
</dbReference>
<dbReference type="InterPro" id="IPR033112">
    <property type="entry name" value="PLipase_A2_Asp_AS"/>
</dbReference>
<dbReference type="InterPro" id="IPR016090">
    <property type="entry name" value="PLipase_A2_dom"/>
</dbReference>
<dbReference type="InterPro" id="IPR036444">
    <property type="entry name" value="PLipase_A2_dom_sf"/>
</dbReference>
<dbReference type="InterPro" id="IPR033113">
    <property type="entry name" value="PLipase_A2_His_AS"/>
</dbReference>
<dbReference type="PANTHER" id="PTHR11716">
    <property type="entry name" value="PHOSPHOLIPASE A2 FAMILY MEMBER"/>
    <property type="match status" value="1"/>
</dbReference>
<dbReference type="PANTHER" id="PTHR11716:SF9">
    <property type="entry name" value="PHOSPHOLIPASE A2, MEMBRANE ASSOCIATED"/>
    <property type="match status" value="1"/>
</dbReference>
<dbReference type="Pfam" id="PF00068">
    <property type="entry name" value="Phospholip_A2_1"/>
    <property type="match status" value="1"/>
</dbReference>
<dbReference type="PRINTS" id="PR00389">
    <property type="entry name" value="PHPHLIPASEA2"/>
</dbReference>
<dbReference type="SMART" id="SM00085">
    <property type="entry name" value="PA2c"/>
    <property type="match status" value="1"/>
</dbReference>
<dbReference type="SUPFAM" id="SSF48619">
    <property type="entry name" value="Phospholipase A2, PLA2"/>
    <property type="match status" value="1"/>
</dbReference>
<dbReference type="PROSITE" id="PS00119">
    <property type="entry name" value="PA2_ASP"/>
    <property type="match status" value="1"/>
</dbReference>
<dbReference type="PROSITE" id="PS00118">
    <property type="entry name" value="PA2_HIS"/>
    <property type="match status" value="1"/>
</dbReference>
<reference key="1">
    <citation type="journal article" date="1988" name="Nucleic Acids Res.">
        <title>Cloning and sequencing of cDNAs encoding the two subunits of Crotoxin.</title>
        <authorList>
            <person name="Ducancel F."/>
            <person name="Guignery Frelat G."/>
            <person name="Menez A."/>
            <person name="Boulain J.-C."/>
            <person name="Bouchier C."/>
            <person name="Bon C."/>
        </authorList>
    </citation>
    <scope>NUCLEOTIDE SEQUENCE [MRNA]</scope>
    <scope>TISSUE SPECIFICITY</scope>
    <source>
        <tissue>Venom gland</tissue>
    </source>
</reference>
<reference key="2">
    <citation type="journal article" date="1994" name="Eur. J. Biochem.">
        <title>The origin of the diversity of crotoxin isoforms in the venom of Crotalus durissus terrificus.</title>
        <authorList>
            <person name="Faure G."/>
            <person name="Choumet V."/>
            <person name="Bouchier C."/>
            <person name="Camoin L."/>
            <person name="Guillaume J.-L."/>
            <person name="Monegier B."/>
            <person name="Vuilhorgne M."/>
            <person name="Bon C."/>
        </authorList>
    </citation>
    <scope>PROTEIN SEQUENCE OF 17-49</scope>
    <scope>MASS SPECTROMETRY</scope>
    <scope>SUBCELLULAR LOCATION</scope>
    <source>
        <tissue>Venom</tissue>
    </source>
</reference>
<reference key="3">
    <citation type="journal article" date="2004" name="Biochem. J.">
        <title>Molecular evolution and structure-function relationships of crotoxin-like and asparagine-6-containing phospholipases A2 in pit viper venoms.</title>
        <authorList>
            <person name="Chen Y.-H."/>
            <person name="Wang Y.-M."/>
            <person name="Hseu M.-J."/>
            <person name="Tsai I.-H."/>
        </authorList>
    </citation>
    <scope>PROTEIN SEQUENCE OF 17-39</scope>
    <scope>FUNCTION</scope>
    <scope>SUBUNIT</scope>
    <scope>MASS SPECTROMETRY</scope>
    <source>
        <tissue>Venom</tissue>
    </source>
</reference>
<reference key="4">
    <citation type="journal article" date="1993" name="Eur. J. Biochem.">
        <title>Comparison of crotoxin isoforms reveals that stability of the complex plays a major role in its pharmacological action.</title>
        <authorList>
            <person name="Faure G."/>
            <person name="Harvey A.L."/>
            <person name="Thomson E."/>
            <person name="Saliou B."/>
            <person name="Radvanyi F."/>
            <person name="Bon C."/>
        </authorList>
    </citation>
    <scope>BIOPHYSICOCHEMICAL PROPERTIES</scope>
    <scope>SUBUNIT</scope>
    <scope>LETHAL DOSES</scope>
</reference>
<reference key="5">
    <citation type="journal article" date="1996" name="Biochem. Pharmacol.">
        <title>Regulation of epidermal growth factor receptor activity by crotoxin, a snake venom phospholipase A2 toxin. A novel growth inhibitory mechanism.</title>
        <authorList>
            <person name="Donato N.J."/>
            <person name="Martin C.A."/>
            <person name="Perez M."/>
            <person name="Newman R.A."/>
            <person name="Vidal J.C."/>
            <person name="Etcheverry M."/>
        </authorList>
    </citation>
    <scope>FUNCTION</scope>
</reference>
<reference key="6">
    <citation type="journal article" date="2000" name="Eur. J. Biochem.">
        <title>Interaction of the neurotoxic and nontoxic secretory phospholipases A2 with the crotoxin inhibitor from Crotalus serum.</title>
        <authorList>
            <person name="Faure G."/>
            <person name="Villela C."/>
            <person name="Perales J."/>
            <person name="Bon C."/>
        </authorList>
    </citation>
    <scope>INHIBITION OF CROTOXIN BY CICS</scope>
</reference>
<reference key="7">
    <citation type="journal article" date="2002" name="Clin. Cancer Res.">
        <title>Phase I and pharmacokinetics study of crotoxin (cytotoxic PLA(2), NSC-624244) in patients with advanced cancer.</title>
        <authorList>
            <person name="Cura J.E."/>
            <person name="Blanzaco D.P."/>
            <person name="Brisson C."/>
            <person name="Cura M.A."/>
            <person name="Cabrol R."/>
            <person name="Larrateguy L."/>
            <person name="Mendez C."/>
            <person name="Sechi J.C."/>
            <person name="Silveira J.S."/>
            <person name="Theiller E."/>
            <person name="de Roodt A.R."/>
            <person name="Vidal J.C."/>
        </authorList>
    </citation>
    <scope>PHARMACEUTICAL</scope>
</reference>
<reference key="8">
    <citation type="journal article" date="2007" name="BMC Struct. Biol.">
        <title>Characterization of a human coagulation factor Xa-binding site on Viperidae snake venom phospholipases A2 by affinity binding studies and molecular bioinformatics.</title>
        <authorList>
            <person name="Faure G."/>
            <person name="Gowda V.T."/>
            <person name="Maroun R.C."/>
        </authorList>
    </citation>
    <scope>FUNCTION AS AN ANTICOAGULANT</scope>
    <scope>SITE</scope>
    <scope>3D-STRUCTURE MODELING</scope>
</reference>
<reference key="9">
    <citation type="journal article" date="2010" name="Toxicon">
        <title>Crotoxin: novel activities for a classic beta-neurotoxin.</title>
        <authorList>
            <person name="Sampaio S.C."/>
            <person name="Hyslop S."/>
            <person name="Fontes M.R."/>
            <person name="Prado-Franceschi J."/>
            <person name="Zambelli V.O."/>
            <person name="Magro A.J."/>
            <person name="Brigatte P."/>
            <person name="Gutierrez V.P."/>
            <person name="Cury Y."/>
        </authorList>
    </citation>
    <scope>REVIEW</scope>
</reference>
<reference key="10">
    <citation type="journal article" date="2011" name="J. Mol. Biol.">
        <title>Crystal structure of crotoxin reveals key residues involved in the stability and toxicity of this potent heterodimeric beta-neurotoxin.</title>
        <authorList>
            <person name="Faure G."/>
            <person name="Xu H."/>
            <person name="Saul F.A."/>
        </authorList>
    </citation>
    <scope>SITES</scope>
</reference>
<reference key="11">
    <citation type="journal article" date="2016" name="J. Mol. Biol.">
        <title>Rattlesnake phospholipase A2 increases CFTR-chloride channel current and corrects DelF508CFTR dysfunction: impact in cystic fibrosis.</title>
        <authorList>
            <person name="Faure G."/>
            <person name="Bakouh N."/>
            <person name="Lourdel S."/>
            <person name="Odolczyk N."/>
            <person name="Premchandar A."/>
            <person name="Servel N."/>
            <person name="Hatton A."/>
            <person name="Ostrowski M.K."/>
            <person name="Xu H."/>
            <person name="Saul F.A."/>
            <person name="Moquereau C."/>
            <person name="Bitam S."/>
            <person name="Pranke I."/>
            <person name="Planelles G."/>
            <person name="Teulon J."/>
            <person name="Herrmann H."/>
            <person name="Roldan A."/>
            <person name="Zielenkiewicz P."/>
            <person name="Dadlez M."/>
            <person name="Lukacs G.L."/>
            <person name="Sermet-Gaudelus I."/>
            <person name="Ollero M."/>
            <person name="Corringer P.J."/>
            <person name="Edelman A."/>
        </authorList>
    </citation>
    <scope>PHARMACEUTICAL</scope>
    <scope>SUBUNIT</scope>
</reference>
<reference key="12">
    <citation type="journal article" date="2019" name="Sci. Rep.">
        <title>Crotoxin promotes macrophage reprogramming towards an antiangiogenic phenotype.</title>
        <authorList>
            <person name="de Araujo Pimenta L."/>
            <person name="de Almeida M.E.S."/>
            <person name="Bretones M.L."/>
            <person name="Cirillo M.C."/>
            <person name="Curi R."/>
            <person name="Sampaio S.C."/>
        </authorList>
    </citation>
    <scope>PHARMACEUTICAL</scope>
</reference>
<reference key="13">
    <citation type="journal article" date="2008" name="Proteins">
        <title>Insights into the role of oligomeric state on the biological activities of crotoxin: crystal structure of a tetrameric phospholipase A2 formed by two isoforms of crotoxin B from Crotalus durissus terrificus venom.</title>
        <authorList>
            <person name="Marchi-Salvador D.P."/>
            <person name="Correa L.C."/>
            <person name="Magro A.J."/>
            <person name="Oliveira C.Z."/>
            <person name="Soares A.M."/>
            <person name="Fontes M.R."/>
        </authorList>
    </citation>
    <scope>X-RAY CRYSTALLOGRAPHY (2.28 ANGSTROMS) OF 17-138 IN COMPLEX WITH CALCIUM ION</scope>
    <scope>COFACTOR</scope>
    <scope>DISULFIDE BONDS</scope>
    <source>
        <tissue>Venom</tissue>
    </source>
</reference>
<proteinExistence type="evidence at protein level"/>
<comment type="function">
    <text evidence="1 7">Heterodimer CA-CB: Crotoxin is a potent presynaptic neurotoxin that possesses phospholipase A2 (PLA2) activity and exerts a lethal action by blocking neuromuscular transmission (By similarity). It consists of a non-covalent association of a basic and weakly toxic PLA2 subunit (CBa2, CBb, CBc, or CBd), with a small acidic, non-enzymatic and non-toxic subunit (CA1, CA2, CA3 or CA4) (By similarity). The complex acts by binding to a specific 48-kDa protein (R48) receptor located on presynaptic membranes, forming a transient ternary complex CA-CB-R48, followed by dissociation of the CA-CB complex and release of the CA subunit (By similarity). At equilibrium, only the CB subunits remain associated with the specific crotoxin receptor (By similarity). In addition to neurotoxicity, crotoxin has been found to exert myotoxicity, nephrotoxicity, and cardiovascular toxicity (PubMed:20109480). Moreover, anti-inflammatory, immunomodulatory, anti-tumor and analgesic effects of crotoxin have also been reported (PubMed:20109480).</text>
</comment>
<comment type="function">
    <text evidence="5 9">Monomer CBc: The basic subunit of crotoxin is a snake venom phospholipase A2 (PLA2) that exhibits weak neurotoxicity (10-fold less than the heterodimer) and very strong anticoagulant effects by binding to factor Xa (F10) and inhibiting the prothrombinase activity (IC(50) is 0.7 nM) (PubMed:18062812). In addition, it shows the same effects described for the heterodimer and binds the nucleotide-binding domain (NBD1) of CFTR chloride channels and increases the channel current (PubMed:27241308). PLA2 catalyzes the calcium-dependent hydrolysis of the 2-acyl groups in 3-sn-phosphoglycerides.</text>
</comment>
<comment type="catalytic activity">
    <reaction evidence="2 3">
        <text>a 1,2-diacyl-sn-glycero-3-phosphocholine + H2O = a 1-acyl-sn-glycero-3-phosphocholine + a fatty acid + H(+)</text>
        <dbReference type="Rhea" id="RHEA:15801"/>
        <dbReference type="ChEBI" id="CHEBI:15377"/>
        <dbReference type="ChEBI" id="CHEBI:15378"/>
        <dbReference type="ChEBI" id="CHEBI:28868"/>
        <dbReference type="ChEBI" id="CHEBI:57643"/>
        <dbReference type="ChEBI" id="CHEBI:58168"/>
        <dbReference type="EC" id="3.1.1.4"/>
    </reaction>
</comment>
<comment type="cofactor">
    <cofactor evidence="6">
        <name>Ca(2+)</name>
        <dbReference type="ChEBI" id="CHEBI:29108"/>
    </cofactor>
    <text evidence="6">Binds 1 Ca(2+) ion.</text>
</comment>
<comment type="biophysicochemical properties">
    <kinetics>
        <KM evidence="12">0.07 uM for 1-palmitoyl-2-(10-pyrenyldecanoyl)-sn-glycero-3-monomethyl phosphatidic acid (monomer CBc)</KM>
        <KM evidence="12">0.22 uM for 1-palmitoyl-2-(10-pyrenyldecanoyl)-sn-glycero-3-monomethyl phosphatidic acid (class 1 heterodimer CA2-CBc)</KM>
        <KM evidence="12">0.2 uM for 1-palmitoyl-2-(10-pyrenyldecanoyl)-sn-glycero-3-monomethyl phosphatidic acid (class 1 heterodimer CA3-CBc)</KM>
        <Vmax evidence="12">18.0 umol/min/mg enzyme (monomer CBc)</Vmax>
        <Vmax evidence="12">7.0 umol/min/mg enzyme (class 1 heterodimer CA2-CBc)</Vmax>
        <Vmax evidence="12">6.6 umol/min/mg enzyme (class 1 heterodimer CA3-CBc)</Vmax>
    </kinetics>
</comment>
<comment type="subunit">
    <text evidence="4 6 9 12">Heterodimer of one of the acidic (CA1, CA2, CA3 or CA4) and one of the basic (CBa1, CBa2, CBb, CBc or CBd) subunits; non-covalently linked. The acidic subunit is non-toxic, without enzymatic activity and comprises 3 peptides that are cross-linked by 5 disulfide bridges. The basic subunit is toxic, has phospholipase A2 activity and is composed of a single chain. Multiple variants of each subunit give different crotoxin complexes that can be subdivided into 2 classes: (1) those of high toxicity, low PLA2 activity (CBb, CBc and CBd linked with high affinity to any CA) and high stability (K(d)=4.5 nM) and (2) those of moderate toxicity, high PLA2 activity (CBa2 linked with low affinity to any CA) and low stability (K(d)=25 nM). Interacts with human NBD1 domain of CFTR (PubMed:27241308).</text>
</comment>
<comment type="subcellular location">
    <subcellularLocation>
        <location evidence="11">Secreted</location>
    </subcellularLocation>
</comment>
<comment type="tissue specificity">
    <text evidence="10">Expressed by the venom gland.</text>
</comment>
<comment type="mass spectrometry"/>
<comment type="mass spectrometry"/>
<comment type="toxic dose">
    <text evidence="12">In monomer CBc, LD(50) is 480 ug/kg by intravenous injection into mice.</text>
</comment>
<comment type="toxic dose">
    <text evidence="12">In class 1 heterodimer CA2-CBc, LD(50) is 80 ug/kg by intravenous injection into mice.</text>
</comment>
<comment type="toxic dose">
    <text evidence="12">In class 1 heterodimer CA3-CBc, LD(50) is 110 ug/kg by intravenous injection into mice.</text>
</comment>
<comment type="pharmaceutical">
    <text evidence="16">Crotoxin (CA-CBc) is under phase I clinical trial as an anti-tumor drug. It has been shown to induce neurotoxic tolerance in animals allowing them to receive high doses associated with effective anti-tumor activity in the absence of adverse side effects.</text>
</comment>
<comment type="pharmaceutical">
    <text evidence="9">May be used to develop new agents to treat the most common mutation of cystic fibrosis (Phe-508 DEL). It shows a double function: (i) as a potentiator, by increasing the chloride channel current, and (ii) as a corrector, by permitting Phe-508 DEL to escape from the degradation pathway, facilitating its biosynthesis and subsequent delivery to the plasma membrane.</text>
</comment>
<comment type="miscellaneous">
    <text evidence="1 14">The crotoxin heterodimer is inhibited by the crotoxin inhibitor from Crotalus serum (CICS). CICS neutralizes the lethal potency of crotoxin and inhibits its PLA2 activity. CICS only binds tightly to the CB subunit and induces the dissociation of the heterodimer (By similarity). Tested on the CA2-CBd heterodimer (PubMed:10903514).</text>
</comment>
<comment type="similarity">
    <text evidence="13">Belongs to the phospholipase A2 family. Group II subfamily. D49 sub-subfamily.</text>
</comment>
<name>PA2BC_CRODU</name>
<organism>
    <name type="scientific">Crotalus durissus terrificus</name>
    <name type="common">South American rattlesnake</name>
    <dbReference type="NCBI Taxonomy" id="8732"/>
    <lineage>
        <taxon>Eukaryota</taxon>
        <taxon>Metazoa</taxon>
        <taxon>Chordata</taxon>
        <taxon>Craniata</taxon>
        <taxon>Vertebrata</taxon>
        <taxon>Euteleostomi</taxon>
        <taxon>Lepidosauria</taxon>
        <taxon>Squamata</taxon>
        <taxon>Bifurcata</taxon>
        <taxon>Unidentata</taxon>
        <taxon>Episquamata</taxon>
        <taxon>Toxicofera</taxon>
        <taxon>Serpentes</taxon>
        <taxon>Colubroidea</taxon>
        <taxon>Viperidae</taxon>
        <taxon>Crotalinae</taxon>
        <taxon>Crotalus</taxon>
    </lineage>
</organism>
<sequence>MRALWIVAVLLVGVEGHLLQFNKMIKFETRKNAIPFYAFYGCYCGWGGRGRPKDATDRCCFVHDCCYGKLAKCNTKWDIYPYSLKSGYITCGKGTWCEEQICECDRVAAECLRRSLSTYKYGYMFYPDSRCRGPSETC</sequence>
<accession>P62022</accession>
<accession>P07517</accession>
<accession>P23559</accession>
<evidence type="ECO:0000250" key="1">
    <source>
        <dbReference type="UniProtKB" id="C0HM14"/>
    </source>
</evidence>
<evidence type="ECO:0000255" key="2">
    <source>
        <dbReference type="PROSITE-ProRule" id="PRU10035"/>
    </source>
</evidence>
<evidence type="ECO:0000255" key="3">
    <source>
        <dbReference type="PROSITE-ProRule" id="PRU10036"/>
    </source>
</evidence>
<evidence type="ECO:0000269" key="4">
    <source>
    </source>
</evidence>
<evidence type="ECO:0000269" key="5">
    <source>
    </source>
</evidence>
<evidence type="ECO:0000269" key="6">
    <source>
    </source>
</evidence>
<evidence type="ECO:0000269" key="7">
    <source>
    </source>
</evidence>
<evidence type="ECO:0000269" key="8">
    <source>
    </source>
</evidence>
<evidence type="ECO:0000269" key="9">
    <source>
    </source>
</evidence>
<evidence type="ECO:0000269" key="10">
    <source>
    </source>
</evidence>
<evidence type="ECO:0000269" key="11">
    <source>
    </source>
</evidence>
<evidence type="ECO:0000269" key="12">
    <source>
    </source>
</evidence>
<evidence type="ECO:0000305" key="13"/>
<evidence type="ECO:0000305" key="14">
    <source>
    </source>
</evidence>
<evidence type="ECO:0000305" key="15">
    <source>
    </source>
</evidence>
<evidence type="ECO:0000305" key="16">
    <source>
    </source>
</evidence>
<evidence type="ECO:0007744" key="17">
    <source>
        <dbReference type="PDB" id="2QOG"/>
    </source>
</evidence>
<evidence type="ECO:0007829" key="18">
    <source>
        <dbReference type="PDB" id="2QOG"/>
    </source>
</evidence>
<protein>
    <recommendedName>
        <fullName>Phospholipase A2 crotoxin basic subunit CBc</fullName>
        <shortName>CB1</shortName>
        <shortName>CTX subunit CBc</shortName>
        <shortName>svPLA2</shortName>
        <ecNumber evidence="2 3">3.1.1.4</ecNumber>
    </recommendedName>
    <alternativeName>
        <fullName>Phosphatidylcholine 2-acylhydrolase</fullName>
    </alternativeName>
</protein>